<feature type="chain" id="PRO_0000240063" description="NADH-quinone oxidoreductase subunit H">
    <location>
        <begin position="1"/>
        <end position="350"/>
    </location>
</feature>
<feature type="transmembrane region" description="Helical" evidence="1">
    <location>
        <begin position="31"/>
        <end position="51"/>
    </location>
</feature>
<feature type="transmembrane region" description="Helical" evidence="1">
    <location>
        <begin position="102"/>
        <end position="122"/>
    </location>
</feature>
<feature type="transmembrane region" description="Helical" evidence="1">
    <location>
        <begin position="132"/>
        <end position="152"/>
    </location>
</feature>
<feature type="transmembrane region" description="Helical" evidence="1">
    <location>
        <begin position="171"/>
        <end position="191"/>
    </location>
</feature>
<feature type="transmembrane region" description="Helical" evidence="1">
    <location>
        <begin position="205"/>
        <end position="225"/>
    </location>
</feature>
<feature type="transmembrane region" description="Helical" evidence="1">
    <location>
        <begin position="263"/>
        <end position="283"/>
    </location>
</feature>
<feature type="transmembrane region" description="Helical" evidence="1">
    <location>
        <begin position="286"/>
        <end position="306"/>
    </location>
</feature>
<feature type="transmembrane region" description="Helical" evidence="1">
    <location>
        <begin position="322"/>
        <end position="342"/>
    </location>
</feature>
<sequence>MGENLFVGMAKGLRTWLESQHFVPLVTDVFLMLLAVVGVLAFLFLNALFLIYYDRKFGAWVQARLGPNRVGPRGIFQTVADTVKLFAKEIFIPNNVDRWPYLLAPVLIFTIPVMLFLVIPFGKGMVPYDLNLGVLYLVAITSVETIVLWMAGWSSNNKYSLLGAMRSVAQMLSYEMPVILAMLSVVMMAGSMKLSDIVAAQQKVWFIFLQPVGFLIYFIAVNAEFKRTPFDLVEGESEIISGPYTEYSGMNFALFFLAEYTNFMIGAIMVTTLFLGGWNAPFGWTFIPSWLWFIIKMYFVITLYMWTRWTFLRIRIDQMLNFAWKFLLPVSLANIFITGFGLYLYRMIRW</sequence>
<gene>
    <name evidence="1" type="primary">nuoH</name>
    <name type="ordered locus">CHY_1421</name>
</gene>
<protein>
    <recommendedName>
        <fullName evidence="1">NADH-quinone oxidoreductase subunit H</fullName>
        <ecNumber evidence="1">7.1.1.-</ecNumber>
    </recommendedName>
    <alternativeName>
        <fullName evidence="1">NADH dehydrogenase I subunit H</fullName>
    </alternativeName>
    <alternativeName>
        <fullName evidence="1">NDH-1 subunit H</fullName>
    </alternativeName>
</protein>
<comment type="function">
    <text evidence="1">NDH-1 shuttles electrons from NADH, via FMN and iron-sulfur (Fe-S) centers, to quinones in the respiratory chain. The immediate electron acceptor for the enzyme in this species is believed to be ubiquinone. Couples the redox reaction to proton translocation (for every two electrons transferred, four hydrogen ions are translocated across the cytoplasmic membrane), and thus conserves the redox energy in a proton gradient. This subunit may bind ubiquinone.</text>
</comment>
<comment type="catalytic activity">
    <reaction evidence="1">
        <text>a quinone + NADH + 5 H(+)(in) = a quinol + NAD(+) + 4 H(+)(out)</text>
        <dbReference type="Rhea" id="RHEA:57888"/>
        <dbReference type="ChEBI" id="CHEBI:15378"/>
        <dbReference type="ChEBI" id="CHEBI:24646"/>
        <dbReference type="ChEBI" id="CHEBI:57540"/>
        <dbReference type="ChEBI" id="CHEBI:57945"/>
        <dbReference type="ChEBI" id="CHEBI:132124"/>
    </reaction>
</comment>
<comment type="subunit">
    <text evidence="1">NDH-1 is composed of 14 different subunits. Subunits NuoA, H, J, K, L, M, N constitute the membrane sector of the complex.</text>
</comment>
<comment type="subcellular location">
    <subcellularLocation>
        <location evidence="1">Cell membrane</location>
        <topology evidence="1">Multi-pass membrane protein</topology>
    </subcellularLocation>
</comment>
<comment type="similarity">
    <text evidence="1">Belongs to the complex I subunit 1 family.</text>
</comment>
<evidence type="ECO:0000255" key="1">
    <source>
        <dbReference type="HAMAP-Rule" id="MF_01350"/>
    </source>
</evidence>
<accession>Q3AC81</accession>
<proteinExistence type="inferred from homology"/>
<dbReference type="EC" id="7.1.1.-" evidence="1"/>
<dbReference type="EMBL" id="CP000141">
    <property type="protein sequence ID" value="ABB15886.1"/>
    <property type="molecule type" value="Genomic_DNA"/>
</dbReference>
<dbReference type="RefSeq" id="WP_011344328.1">
    <property type="nucleotide sequence ID" value="NC_007503.1"/>
</dbReference>
<dbReference type="SMR" id="Q3AC81"/>
<dbReference type="STRING" id="246194.CHY_1421"/>
<dbReference type="KEGG" id="chy:CHY_1421"/>
<dbReference type="eggNOG" id="COG1005">
    <property type="taxonomic scope" value="Bacteria"/>
</dbReference>
<dbReference type="HOGENOM" id="CLU_015134_0_1_9"/>
<dbReference type="InParanoid" id="Q3AC81"/>
<dbReference type="OrthoDB" id="9803734at2"/>
<dbReference type="Proteomes" id="UP000002706">
    <property type="component" value="Chromosome"/>
</dbReference>
<dbReference type="GO" id="GO:0005886">
    <property type="term" value="C:plasma membrane"/>
    <property type="evidence" value="ECO:0007669"/>
    <property type="project" value="UniProtKB-SubCell"/>
</dbReference>
<dbReference type="GO" id="GO:0003954">
    <property type="term" value="F:NADH dehydrogenase activity"/>
    <property type="evidence" value="ECO:0007669"/>
    <property type="project" value="TreeGrafter"/>
</dbReference>
<dbReference type="GO" id="GO:0016655">
    <property type="term" value="F:oxidoreductase activity, acting on NAD(P)H, quinone or similar compound as acceptor"/>
    <property type="evidence" value="ECO:0007669"/>
    <property type="project" value="UniProtKB-UniRule"/>
</dbReference>
<dbReference type="GO" id="GO:0048038">
    <property type="term" value="F:quinone binding"/>
    <property type="evidence" value="ECO:0007669"/>
    <property type="project" value="UniProtKB-KW"/>
</dbReference>
<dbReference type="GO" id="GO:0009060">
    <property type="term" value="P:aerobic respiration"/>
    <property type="evidence" value="ECO:0007669"/>
    <property type="project" value="TreeGrafter"/>
</dbReference>
<dbReference type="HAMAP" id="MF_01350">
    <property type="entry name" value="NDH1_NuoH"/>
    <property type="match status" value="1"/>
</dbReference>
<dbReference type="InterPro" id="IPR001694">
    <property type="entry name" value="NADH_UbQ_OxRdtase_su1/FPO"/>
</dbReference>
<dbReference type="InterPro" id="IPR018086">
    <property type="entry name" value="NADH_UbQ_OxRdtase_su1_CS"/>
</dbReference>
<dbReference type="NCBIfam" id="NF004741">
    <property type="entry name" value="PRK06076.1-2"/>
    <property type="match status" value="1"/>
</dbReference>
<dbReference type="PANTHER" id="PTHR11432">
    <property type="entry name" value="NADH DEHYDROGENASE SUBUNIT 1"/>
    <property type="match status" value="1"/>
</dbReference>
<dbReference type="PANTHER" id="PTHR11432:SF3">
    <property type="entry name" value="NADH-UBIQUINONE OXIDOREDUCTASE CHAIN 1"/>
    <property type="match status" value="1"/>
</dbReference>
<dbReference type="Pfam" id="PF00146">
    <property type="entry name" value="NADHdh"/>
    <property type="match status" value="1"/>
</dbReference>
<dbReference type="PROSITE" id="PS00668">
    <property type="entry name" value="COMPLEX1_ND1_2"/>
    <property type="match status" value="1"/>
</dbReference>
<keyword id="KW-1003">Cell membrane</keyword>
<keyword id="KW-0472">Membrane</keyword>
<keyword id="KW-0520">NAD</keyword>
<keyword id="KW-0874">Quinone</keyword>
<keyword id="KW-1185">Reference proteome</keyword>
<keyword id="KW-1278">Translocase</keyword>
<keyword id="KW-0812">Transmembrane</keyword>
<keyword id="KW-1133">Transmembrane helix</keyword>
<keyword id="KW-0830">Ubiquinone</keyword>
<organism>
    <name type="scientific">Carboxydothermus hydrogenoformans (strain ATCC BAA-161 / DSM 6008 / Z-2901)</name>
    <dbReference type="NCBI Taxonomy" id="246194"/>
    <lineage>
        <taxon>Bacteria</taxon>
        <taxon>Bacillati</taxon>
        <taxon>Bacillota</taxon>
        <taxon>Clostridia</taxon>
        <taxon>Thermoanaerobacterales</taxon>
        <taxon>Thermoanaerobacteraceae</taxon>
        <taxon>Carboxydothermus</taxon>
    </lineage>
</organism>
<name>NUOH_CARHZ</name>
<reference key="1">
    <citation type="journal article" date="2005" name="PLoS Genet.">
        <title>Life in hot carbon monoxide: the complete genome sequence of Carboxydothermus hydrogenoformans Z-2901.</title>
        <authorList>
            <person name="Wu M."/>
            <person name="Ren Q."/>
            <person name="Durkin A.S."/>
            <person name="Daugherty S.C."/>
            <person name="Brinkac L.M."/>
            <person name="Dodson R.J."/>
            <person name="Madupu R."/>
            <person name="Sullivan S.A."/>
            <person name="Kolonay J.F."/>
            <person name="Nelson W.C."/>
            <person name="Tallon L.J."/>
            <person name="Jones K.M."/>
            <person name="Ulrich L.E."/>
            <person name="Gonzalez J.M."/>
            <person name="Zhulin I.B."/>
            <person name="Robb F.T."/>
            <person name="Eisen J.A."/>
        </authorList>
    </citation>
    <scope>NUCLEOTIDE SEQUENCE [LARGE SCALE GENOMIC DNA]</scope>
    <source>
        <strain>ATCC BAA-161 / DSM 6008 / Z-2901</strain>
    </source>
</reference>